<proteinExistence type="inferred from homology"/>
<comment type="catalytic activity">
    <reaction>
        <text>Cleavage of hydrophobic, N-terminal signal or leader sequences from secreted and periplasmic proteins.</text>
        <dbReference type="EC" id="3.4.21.89"/>
    </reaction>
</comment>
<comment type="subcellular location">
    <subcellularLocation>
        <location evidence="3">Cell membrane</location>
        <topology evidence="3">Single-pass type II membrane protein</topology>
    </subcellularLocation>
</comment>
<comment type="similarity">
    <text evidence="3">Belongs to the peptidase S26 family.</text>
</comment>
<name>LEP_BACLI</name>
<evidence type="ECO:0000250" key="1"/>
<evidence type="ECO:0000255" key="2"/>
<evidence type="ECO:0000305" key="3"/>
<organism>
    <name type="scientific">Bacillus licheniformis</name>
    <dbReference type="NCBI Taxonomy" id="1402"/>
    <lineage>
        <taxon>Bacteria</taxon>
        <taxon>Bacillati</taxon>
        <taxon>Bacillota</taxon>
        <taxon>Bacilli</taxon>
        <taxon>Bacillales</taxon>
        <taxon>Bacillaceae</taxon>
        <taxon>Bacillus</taxon>
    </lineage>
</organism>
<protein>
    <recommendedName>
        <fullName>Signal peptidase I</fullName>
        <shortName>SPase I</shortName>
        <ecNumber>3.4.21.89</ecNumber>
    </recommendedName>
    <alternativeName>
        <fullName>Leader peptidase I</fullName>
    </alternativeName>
</protein>
<accession>P42668</accession>
<gene>
    <name type="primary">lepB</name>
    <name type="synonym">sip</name>
</gene>
<keyword id="KW-1003">Cell membrane</keyword>
<keyword id="KW-0378">Hydrolase</keyword>
<keyword id="KW-0472">Membrane</keyword>
<keyword id="KW-0645">Protease</keyword>
<keyword id="KW-0812">Transmembrane</keyword>
<keyword id="KW-1133">Transmembrane helix</keyword>
<reference key="1">
    <citation type="submission" date="1993-11" db="EMBL/GenBank/DDBJ databases">
        <authorList>
            <person name="Hoang V."/>
            <person name="Birger A."/>
            <person name="Hofemeister J."/>
        </authorList>
    </citation>
    <scope>NUCLEOTIDE SEQUENCE [GENOMIC DNA]</scope>
    <source>
        <strain>ATCC 9789 / DSM 8785 / NBRC 12195 / NCIMB 6346 / NCTC 6346 / IMET 11025 / NRS 243</strain>
    </source>
</reference>
<feature type="chain" id="PRO_0000109496" description="Signal peptidase I">
    <location>
        <begin position="1"/>
        <end position="186"/>
    </location>
</feature>
<feature type="topological domain" description="Cytoplasmic" evidence="2">
    <location>
        <begin position="1"/>
        <end position="19"/>
    </location>
</feature>
<feature type="transmembrane region" description="Helical" evidence="2">
    <location>
        <begin position="20"/>
        <end position="40"/>
    </location>
</feature>
<feature type="topological domain" description="Extracellular" evidence="2">
    <location>
        <begin position="41"/>
        <end position="186"/>
    </location>
</feature>
<feature type="active site" evidence="1">
    <location>
        <position position="44"/>
    </location>
</feature>
<feature type="active site" evidence="1">
    <location>
        <position position="86"/>
    </location>
</feature>
<dbReference type="EC" id="3.4.21.89"/>
<dbReference type="EMBL" id="X75604">
    <property type="protein sequence ID" value="CAA53272.1"/>
    <property type="molecule type" value="Genomic_DNA"/>
</dbReference>
<dbReference type="RefSeq" id="WP_003181363.1">
    <property type="nucleotide sequence ID" value="NZ_BEXU01000005.1"/>
</dbReference>
<dbReference type="SMR" id="P42668"/>
<dbReference type="MEROPS" id="S26.004"/>
<dbReference type="GeneID" id="92861750"/>
<dbReference type="PATRIC" id="fig|1402.62.peg.3752"/>
<dbReference type="OMA" id="LLKYPRW"/>
<dbReference type="GO" id="GO:0005886">
    <property type="term" value="C:plasma membrane"/>
    <property type="evidence" value="ECO:0007669"/>
    <property type="project" value="UniProtKB-SubCell"/>
</dbReference>
<dbReference type="GO" id="GO:0004252">
    <property type="term" value="F:serine-type endopeptidase activity"/>
    <property type="evidence" value="ECO:0007669"/>
    <property type="project" value="UniProtKB-EC"/>
</dbReference>
<dbReference type="GO" id="GO:0006465">
    <property type="term" value="P:signal peptide processing"/>
    <property type="evidence" value="ECO:0007669"/>
    <property type="project" value="InterPro"/>
</dbReference>
<dbReference type="CDD" id="cd06530">
    <property type="entry name" value="S26_SPase_I"/>
    <property type="match status" value="1"/>
</dbReference>
<dbReference type="FunFam" id="2.10.109.10:FF:000008">
    <property type="entry name" value="Signal peptidase I"/>
    <property type="match status" value="1"/>
</dbReference>
<dbReference type="Gene3D" id="2.10.109.10">
    <property type="entry name" value="Umud Fragment, subunit A"/>
    <property type="match status" value="1"/>
</dbReference>
<dbReference type="InterPro" id="IPR036286">
    <property type="entry name" value="LexA/Signal_pep-like_sf"/>
</dbReference>
<dbReference type="InterPro" id="IPR000223">
    <property type="entry name" value="Pept_S26A_signal_pept_1"/>
</dbReference>
<dbReference type="InterPro" id="IPR019758">
    <property type="entry name" value="Pept_S26A_signal_pept_1_CS"/>
</dbReference>
<dbReference type="InterPro" id="IPR019757">
    <property type="entry name" value="Pept_S26A_signal_pept_1_Lys-AS"/>
</dbReference>
<dbReference type="InterPro" id="IPR019756">
    <property type="entry name" value="Pept_S26A_signal_pept_1_Ser-AS"/>
</dbReference>
<dbReference type="InterPro" id="IPR019533">
    <property type="entry name" value="Peptidase_S26"/>
</dbReference>
<dbReference type="NCBIfam" id="TIGR02227">
    <property type="entry name" value="sigpep_I_bact"/>
    <property type="match status" value="1"/>
</dbReference>
<dbReference type="PANTHER" id="PTHR43390:SF1">
    <property type="entry name" value="CHLOROPLAST PROCESSING PEPTIDASE"/>
    <property type="match status" value="1"/>
</dbReference>
<dbReference type="PANTHER" id="PTHR43390">
    <property type="entry name" value="SIGNAL PEPTIDASE I"/>
    <property type="match status" value="1"/>
</dbReference>
<dbReference type="Pfam" id="PF10502">
    <property type="entry name" value="Peptidase_S26"/>
    <property type="match status" value="1"/>
</dbReference>
<dbReference type="PRINTS" id="PR00727">
    <property type="entry name" value="LEADERPTASE"/>
</dbReference>
<dbReference type="SUPFAM" id="SSF51306">
    <property type="entry name" value="LexA/Signal peptidase"/>
    <property type="match status" value="1"/>
</dbReference>
<dbReference type="PROSITE" id="PS00501">
    <property type="entry name" value="SPASE_I_1"/>
    <property type="match status" value="1"/>
</dbReference>
<dbReference type="PROSITE" id="PS00760">
    <property type="entry name" value="SPASE_I_2"/>
    <property type="match status" value="1"/>
</dbReference>
<dbReference type="PROSITE" id="PS00761">
    <property type="entry name" value="SPASE_I_3"/>
    <property type="match status" value="1"/>
</dbReference>
<sequence length="186" mass="21145">MTEEKSTNKKNSLFEWVKAIIIAVVLALLIRAFLFEPYLVEGTSMDPTLHDGERLFVYKTVRYVGEFKRGDIVIIDGDEKNVHYVKRLIGLPGDTVQMKDDTLYINGKKVSEPYLSENRKEAEAVGVKLTGDFGPVKVPEGKYFVMGDNRQRSMDSRNGLGLIDKKRVAGTSQFVFFPFNEIRKTD</sequence>